<keyword id="KW-0285">Flavoprotein</keyword>
<keyword id="KW-0288">FMN</keyword>
<keyword id="KW-0520">NAD</keyword>
<keyword id="KW-0560">Oxidoreductase</keyword>
<evidence type="ECO:0000255" key="1">
    <source>
        <dbReference type="HAMAP-Rule" id="MF_01216"/>
    </source>
</evidence>
<feature type="chain" id="PRO_1000066535" description="FMN-dependent NADH:quinone oxidoreductase">
    <location>
        <begin position="1"/>
        <end position="201"/>
    </location>
</feature>
<feature type="binding site" evidence="1">
    <location>
        <position position="10"/>
    </location>
    <ligand>
        <name>FMN</name>
        <dbReference type="ChEBI" id="CHEBI:58210"/>
    </ligand>
</feature>
<feature type="binding site" evidence="1">
    <location>
        <begin position="16"/>
        <end position="18"/>
    </location>
    <ligand>
        <name>FMN</name>
        <dbReference type="ChEBI" id="CHEBI:58210"/>
    </ligand>
</feature>
<feature type="binding site" evidence="1">
    <location>
        <begin position="96"/>
        <end position="99"/>
    </location>
    <ligand>
        <name>FMN</name>
        <dbReference type="ChEBI" id="CHEBI:58210"/>
    </ligand>
</feature>
<feature type="binding site" evidence="1">
    <location>
        <begin position="140"/>
        <end position="143"/>
    </location>
    <ligand>
        <name>FMN</name>
        <dbReference type="ChEBI" id="CHEBI:58210"/>
    </ligand>
</feature>
<sequence length="201" mass="21600">MSKVLVLKSSILATSSQSNQLADFFVEQWQAAHAGDQITVRDLAAQPIPVLDGELVGALRPSGTALTPRQQEALALSDELIAELQANDVIVIAAPMYNFNIPTQLKNYFDMIARAGVTFRYTEKGPEGLVTGKRAIILTSRGGIHKDTPTDLVVPYLRLFLGFIGITDVEFVFAEGIAYGPEVATKAQADAKTLLAQVVAA</sequence>
<comment type="function">
    <text evidence="1">Quinone reductase that provides resistance to thiol-specific stress caused by electrophilic quinones.</text>
</comment>
<comment type="function">
    <text evidence="1">Also exhibits azoreductase activity. Catalyzes the reductive cleavage of the azo bond in aromatic azo compounds to the corresponding amines.</text>
</comment>
<comment type="catalytic activity">
    <reaction evidence="1">
        <text>2 a quinone + NADH + H(+) = 2 a 1,4-benzosemiquinone + NAD(+)</text>
        <dbReference type="Rhea" id="RHEA:65952"/>
        <dbReference type="ChEBI" id="CHEBI:15378"/>
        <dbReference type="ChEBI" id="CHEBI:57540"/>
        <dbReference type="ChEBI" id="CHEBI:57945"/>
        <dbReference type="ChEBI" id="CHEBI:132124"/>
        <dbReference type="ChEBI" id="CHEBI:134225"/>
    </reaction>
</comment>
<comment type="catalytic activity">
    <reaction evidence="1">
        <text>N,N-dimethyl-1,4-phenylenediamine + anthranilate + 2 NAD(+) = 2-(4-dimethylaminophenyl)diazenylbenzoate + 2 NADH + 2 H(+)</text>
        <dbReference type="Rhea" id="RHEA:55872"/>
        <dbReference type="ChEBI" id="CHEBI:15378"/>
        <dbReference type="ChEBI" id="CHEBI:15783"/>
        <dbReference type="ChEBI" id="CHEBI:16567"/>
        <dbReference type="ChEBI" id="CHEBI:57540"/>
        <dbReference type="ChEBI" id="CHEBI:57945"/>
        <dbReference type="ChEBI" id="CHEBI:71579"/>
        <dbReference type="EC" id="1.7.1.17"/>
    </reaction>
</comment>
<comment type="cofactor">
    <cofactor evidence="1">
        <name>FMN</name>
        <dbReference type="ChEBI" id="CHEBI:58210"/>
    </cofactor>
    <text evidence="1">Binds 1 FMN per subunit.</text>
</comment>
<comment type="subunit">
    <text evidence="1">Homodimer.</text>
</comment>
<comment type="similarity">
    <text evidence="1">Belongs to the azoreductase type 1 family.</text>
</comment>
<proteinExistence type="inferred from homology"/>
<gene>
    <name evidence="1" type="primary">azoR</name>
    <name type="ordered locus">YpsIP31758_1814</name>
</gene>
<organism>
    <name type="scientific">Yersinia pseudotuberculosis serotype O:1b (strain IP 31758)</name>
    <dbReference type="NCBI Taxonomy" id="349747"/>
    <lineage>
        <taxon>Bacteria</taxon>
        <taxon>Pseudomonadati</taxon>
        <taxon>Pseudomonadota</taxon>
        <taxon>Gammaproteobacteria</taxon>
        <taxon>Enterobacterales</taxon>
        <taxon>Yersiniaceae</taxon>
        <taxon>Yersinia</taxon>
    </lineage>
</organism>
<protein>
    <recommendedName>
        <fullName evidence="1">FMN-dependent NADH:quinone oxidoreductase</fullName>
        <ecNumber evidence="1">1.6.5.-</ecNumber>
    </recommendedName>
    <alternativeName>
        <fullName evidence="1">Azo-dye reductase</fullName>
    </alternativeName>
    <alternativeName>
        <fullName evidence="1">FMN-dependent NADH-azo compound oxidoreductase</fullName>
    </alternativeName>
    <alternativeName>
        <fullName evidence="1">FMN-dependent NADH-azoreductase</fullName>
        <ecNumber evidence="1">1.7.1.17</ecNumber>
    </alternativeName>
</protein>
<name>AZOR_YERP3</name>
<accession>A7FHR1</accession>
<reference key="1">
    <citation type="journal article" date="2007" name="PLoS Genet.">
        <title>The complete genome sequence of Yersinia pseudotuberculosis IP31758, the causative agent of Far East scarlet-like fever.</title>
        <authorList>
            <person name="Eppinger M."/>
            <person name="Rosovitz M.J."/>
            <person name="Fricke W.F."/>
            <person name="Rasko D.A."/>
            <person name="Kokorina G."/>
            <person name="Fayolle C."/>
            <person name="Lindler L.E."/>
            <person name="Carniel E."/>
            <person name="Ravel J."/>
        </authorList>
    </citation>
    <scope>NUCLEOTIDE SEQUENCE [LARGE SCALE GENOMIC DNA]</scope>
    <source>
        <strain>IP 31758</strain>
    </source>
</reference>
<dbReference type="EC" id="1.6.5.-" evidence="1"/>
<dbReference type="EC" id="1.7.1.17" evidence="1"/>
<dbReference type="EMBL" id="CP000720">
    <property type="protein sequence ID" value="ABS46550.1"/>
    <property type="molecule type" value="Genomic_DNA"/>
</dbReference>
<dbReference type="RefSeq" id="WP_002211004.1">
    <property type="nucleotide sequence ID" value="NC_009708.1"/>
</dbReference>
<dbReference type="SMR" id="A7FHR1"/>
<dbReference type="GeneID" id="57976351"/>
<dbReference type="KEGG" id="ypi:YpsIP31758_1814"/>
<dbReference type="HOGENOM" id="CLU_088964_0_0_6"/>
<dbReference type="Proteomes" id="UP000002412">
    <property type="component" value="Chromosome"/>
</dbReference>
<dbReference type="GO" id="GO:0009055">
    <property type="term" value="F:electron transfer activity"/>
    <property type="evidence" value="ECO:0007669"/>
    <property type="project" value="UniProtKB-UniRule"/>
</dbReference>
<dbReference type="GO" id="GO:0010181">
    <property type="term" value="F:FMN binding"/>
    <property type="evidence" value="ECO:0007669"/>
    <property type="project" value="UniProtKB-UniRule"/>
</dbReference>
<dbReference type="GO" id="GO:0016652">
    <property type="term" value="F:oxidoreductase activity, acting on NAD(P)H as acceptor"/>
    <property type="evidence" value="ECO:0007669"/>
    <property type="project" value="UniProtKB-UniRule"/>
</dbReference>
<dbReference type="GO" id="GO:0016655">
    <property type="term" value="F:oxidoreductase activity, acting on NAD(P)H, quinone or similar compound as acceptor"/>
    <property type="evidence" value="ECO:0007669"/>
    <property type="project" value="InterPro"/>
</dbReference>
<dbReference type="FunFam" id="3.40.50.360:FF:000010">
    <property type="entry name" value="FMN-dependent NADH-azoreductase"/>
    <property type="match status" value="1"/>
</dbReference>
<dbReference type="Gene3D" id="3.40.50.360">
    <property type="match status" value="1"/>
</dbReference>
<dbReference type="HAMAP" id="MF_01216">
    <property type="entry name" value="Azoreductase_type1"/>
    <property type="match status" value="1"/>
</dbReference>
<dbReference type="InterPro" id="IPR003680">
    <property type="entry name" value="Flavodoxin_fold"/>
</dbReference>
<dbReference type="InterPro" id="IPR029039">
    <property type="entry name" value="Flavoprotein-like_sf"/>
</dbReference>
<dbReference type="InterPro" id="IPR050104">
    <property type="entry name" value="FMN-dep_NADH:Q_OxRdtase_AzoR1"/>
</dbReference>
<dbReference type="InterPro" id="IPR023048">
    <property type="entry name" value="NADH:quinone_OxRdtase_FMN_depd"/>
</dbReference>
<dbReference type="PANTHER" id="PTHR43741">
    <property type="entry name" value="FMN-DEPENDENT NADH-AZOREDUCTASE 1"/>
    <property type="match status" value="1"/>
</dbReference>
<dbReference type="PANTHER" id="PTHR43741:SF2">
    <property type="entry name" value="FMN-DEPENDENT NADH:QUINONE OXIDOREDUCTASE"/>
    <property type="match status" value="1"/>
</dbReference>
<dbReference type="Pfam" id="PF02525">
    <property type="entry name" value="Flavodoxin_2"/>
    <property type="match status" value="1"/>
</dbReference>
<dbReference type="SUPFAM" id="SSF52218">
    <property type="entry name" value="Flavoproteins"/>
    <property type="match status" value="1"/>
</dbReference>